<name>FRMD8_XENLA</name>
<sequence length="452" mass="51584">MDGSETSHSSGLNDFLLRSSVSSGSRSMDVIIYLINDEVIQLTVDGLSVITAHELHKSIREALQLPETAQDVFALWLISPLLEVQLKPKHQPYKVCRQWHDLLARFTNCSSNDILQDEPYLQFRRNIFLPKARELQISHERILYLLYEEAKYNVLEGRYPCDVEDCEVLGGLACRLELGPYNQNEHTPATIRPKLDTLFPPYLCKKRNGGLLTTFKNRGGRQASFEQTVLNTYKEVKETSACTDEQAMKNHYKEYLKKCHELPYYGCAFFQGDVDKPAQGFLNRSGRKAVSVSVNLEGVSVIDRKEKHVLISLTYPELSWDHTYPDEDEHILWLEFDGESEGTPVNKLLKIYSKQAELMSGLIEYCIELSQSTESPASDSTPGNSQLSEKRSKLKRQESVLCNRMKHLTTIDYVEDGAKITRVKPKRTASFFTRQNTHNYSAVQPSETPTES</sequence>
<evidence type="ECO:0000250" key="1">
    <source>
        <dbReference type="UniProtKB" id="Q9BZ67"/>
    </source>
</evidence>
<evidence type="ECO:0000255" key="2">
    <source>
        <dbReference type="PROSITE-ProRule" id="PRU00084"/>
    </source>
</evidence>
<evidence type="ECO:0000256" key="3">
    <source>
        <dbReference type="SAM" id="MobiDB-lite"/>
    </source>
</evidence>
<protein>
    <recommendedName>
        <fullName>FERM domain-containing protein 8</fullName>
    </recommendedName>
</protein>
<reference key="1">
    <citation type="submission" date="2003-02" db="EMBL/GenBank/DDBJ databases">
        <authorList>
            <consortium name="NIH - Xenopus Gene Collection (XGC) project"/>
        </authorList>
    </citation>
    <scope>NUCLEOTIDE SEQUENCE [LARGE SCALE MRNA]</scope>
    <source>
        <tissue>Embryo</tissue>
    </source>
</reference>
<accession>Q7ZWP1</accession>
<proteinExistence type="evidence at transcript level"/>
<comment type="function">
    <text evidence="1">Promotes the cell surface stability of RHBDF1 and RHBDF2 and prevents their degradation via the endolysosomal pathway. By acting on RHBDF proteins, involved in ADAM17-mediated ligand shedding (By similarity). May negatively regulate Wnt signaling (By similarity).</text>
</comment>
<comment type="subcellular location">
    <subcellularLocation>
        <location evidence="1">Cytoplasm</location>
        <location evidence="1">Cytosol</location>
    </subcellularLocation>
    <subcellularLocation>
        <location evidence="1">Cell membrane</location>
    </subcellularLocation>
</comment>
<dbReference type="EMBL" id="BC046857">
    <property type="protein sequence ID" value="AAH46857.1"/>
    <property type="molecule type" value="mRNA"/>
</dbReference>
<dbReference type="RefSeq" id="NP_001079676.1">
    <property type="nucleotide sequence ID" value="NM_001086207.1"/>
</dbReference>
<dbReference type="SMR" id="Q7ZWP1"/>
<dbReference type="BioGRID" id="97606">
    <property type="interactions" value="1"/>
</dbReference>
<dbReference type="IntAct" id="Q7ZWP1">
    <property type="interactions" value="1"/>
</dbReference>
<dbReference type="DNASU" id="379363"/>
<dbReference type="GeneID" id="379363"/>
<dbReference type="KEGG" id="xla:379363"/>
<dbReference type="AGR" id="Xenbase:XB-GENE-6079145"/>
<dbReference type="CTD" id="379363"/>
<dbReference type="Xenbase" id="XB-GENE-6079145">
    <property type="gene designation" value="frmd8.L"/>
</dbReference>
<dbReference type="OMA" id="GCAFFYG"/>
<dbReference type="OrthoDB" id="2142533at2759"/>
<dbReference type="Proteomes" id="UP000186698">
    <property type="component" value="Chromosome 4L"/>
</dbReference>
<dbReference type="Bgee" id="379363">
    <property type="expression patterns" value="Expressed in gastrula and 19 other cell types or tissues"/>
</dbReference>
<dbReference type="GO" id="GO:0005856">
    <property type="term" value="C:cytoskeleton"/>
    <property type="evidence" value="ECO:0007669"/>
    <property type="project" value="InterPro"/>
</dbReference>
<dbReference type="GO" id="GO:0005829">
    <property type="term" value="C:cytosol"/>
    <property type="evidence" value="ECO:0000250"/>
    <property type="project" value="UniProtKB"/>
</dbReference>
<dbReference type="GO" id="GO:0005886">
    <property type="term" value="C:plasma membrane"/>
    <property type="evidence" value="ECO:0000250"/>
    <property type="project" value="UniProtKB"/>
</dbReference>
<dbReference type="GO" id="GO:0090090">
    <property type="term" value="P:negative regulation of canonical Wnt signaling pathway"/>
    <property type="evidence" value="ECO:0000318"/>
    <property type="project" value="GO_Central"/>
</dbReference>
<dbReference type="GO" id="GO:0032760">
    <property type="term" value="P:positive regulation of tumor necrosis factor production"/>
    <property type="evidence" value="ECO:0000250"/>
    <property type="project" value="UniProtKB"/>
</dbReference>
<dbReference type="CDD" id="cd14473">
    <property type="entry name" value="FERM_B-lobe"/>
    <property type="match status" value="1"/>
</dbReference>
<dbReference type="FunFam" id="1.20.80.10:FF:000023">
    <property type="entry name" value="FERM domain containing 8"/>
    <property type="match status" value="1"/>
</dbReference>
<dbReference type="FunFam" id="2.30.29.30:FF:000216">
    <property type="entry name" value="FERM domain-containing protein 8"/>
    <property type="match status" value="1"/>
</dbReference>
<dbReference type="FunFam" id="3.10.20.90:FF:000191">
    <property type="entry name" value="FERM domain-containing protein 8"/>
    <property type="match status" value="1"/>
</dbReference>
<dbReference type="Gene3D" id="1.20.80.10">
    <property type="match status" value="1"/>
</dbReference>
<dbReference type="Gene3D" id="3.10.20.90">
    <property type="entry name" value="Phosphatidylinositol 3-kinase Catalytic Subunit, Chain A, domain 1"/>
    <property type="match status" value="1"/>
</dbReference>
<dbReference type="Gene3D" id="2.30.29.30">
    <property type="entry name" value="Pleckstrin-homology domain (PH domain)/Phosphotyrosine-binding domain (PTB)"/>
    <property type="match status" value="1"/>
</dbReference>
<dbReference type="InterPro" id="IPR019749">
    <property type="entry name" value="Band_41_domain"/>
</dbReference>
<dbReference type="InterPro" id="IPR014352">
    <property type="entry name" value="FERM/acyl-CoA-bd_prot_sf"/>
</dbReference>
<dbReference type="InterPro" id="IPR035963">
    <property type="entry name" value="FERM_2"/>
</dbReference>
<dbReference type="InterPro" id="IPR019748">
    <property type="entry name" value="FERM_central"/>
</dbReference>
<dbReference type="InterPro" id="IPR000299">
    <property type="entry name" value="FERM_domain"/>
</dbReference>
<dbReference type="InterPro" id="IPR051594">
    <property type="entry name" value="KRIT1/FRMD8"/>
</dbReference>
<dbReference type="InterPro" id="IPR011993">
    <property type="entry name" value="PH-like_dom_sf"/>
</dbReference>
<dbReference type="PANTHER" id="PTHR13283:SF10">
    <property type="entry name" value="FERM DOMAIN-CONTAINING PROTEIN 8"/>
    <property type="match status" value="1"/>
</dbReference>
<dbReference type="PANTHER" id="PTHR13283">
    <property type="entry name" value="KREV INTERACTION TRAPPED 1-RELATED"/>
    <property type="match status" value="1"/>
</dbReference>
<dbReference type="Pfam" id="PF00373">
    <property type="entry name" value="FERM_M"/>
    <property type="match status" value="1"/>
</dbReference>
<dbReference type="Pfam" id="PF24522">
    <property type="entry name" value="KRIT1_FRMD8_FERM_C"/>
    <property type="match status" value="1"/>
</dbReference>
<dbReference type="SMART" id="SM00295">
    <property type="entry name" value="B41"/>
    <property type="match status" value="1"/>
</dbReference>
<dbReference type="SUPFAM" id="SSF47031">
    <property type="entry name" value="Second domain of FERM"/>
    <property type="match status" value="1"/>
</dbReference>
<dbReference type="PROSITE" id="PS50057">
    <property type="entry name" value="FERM_3"/>
    <property type="match status" value="1"/>
</dbReference>
<feature type="chain" id="PRO_0000295781" description="FERM domain-containing protein 8">
    <location>
        <begin position="1"/>
        <end position="452"/>
    </location>
</feature>
<feature type="domain" description="FERM" evidence="2">
    <location>
        <begin position="28"/>
        <end position="374"/>
    </location>
</feature>
<feature type="region of interest" description="Disordered" evidence="3">
    <location>
        <begin position="373"/>
        <end position="395"/>
    </location>
</feature>
<feature type="compositionally biased region" description="Polar residues" evidence="3">
    <location>
        <begin position="373"/>
        <end position="387"/>
    </location>
</feature>
<keyword id="KW-1003">Cell membrane</keyword>
<keyword id="KW-0963">Cytoplasm</keyword>
<keyword id="KW-0472">Membrane</keyword>
<keyword id="KW-1185">Reference proteome</keyword>
<organism>
    <name type="scientific">Xenopus laevis</name>
    <name type="common">African clawed frog</name>
    <dbReference type="NCBI Taxonomy" id="8355"/>
    <lineage>
        <taxon>Eukaryota</taxon>
        <taxon>Metazoa</taxon>
        <taxon>Chordata</taxon>
        <taxon>Craniata</taxon>
        <taxon>Vertebrata</taxon>
        <taxon>Euteleostomi</taxon>
        <taxon>Amphibia</taxon>
        <taxon>Batrachia</taxon>
        <taxon>Anura</taxon>
        <taxon>Pipoidea</taxon>
        <taxon>Pipidae</taxon>
        <taxon>Xenopodinae</taxon>
        <taxon>Xenopus</taxon>
        <taxon>Xenopus</taxon>
    </lineage>
</organism>
<gene>
    <name type="primary">frmd8</name>
</gene>